<protein>
    <recommendedName>
        <fullName>Latent membrane protein 1</fullName>
        <shortName>LMP-1</shortName>
    </recommendedName>
    <alternativeName>
        <fullName>Protein p63</fullName>
    </alternativeName>
</protein>
<feature type="chain" id="PRO_0000116180" description="Latent membrane protein 1">
    <location>
        <begin position="1"/>
        <end position="404"/>
    </location>
</feature>
<feature type="topological domain" description="Cytoplasmic" evidence="1">
    <location>
        <begin position="1"/>
        <end position="23"/>
    </location>
</feature>
<feature type="transmembrane region" description="Helical" evidence="3">
    <location>
        <begin position="24"/>
        <end position="44"/>
    </location>
</feature>
<feature type="topological domain" description="Extracellular" evidence="1">
    <location>
        <begin position="45"/>
        <end position="51"/>
    </location>
</feature>
<feature type="transmembrane region" description="Helical" evidence="3">
    <location>
        <begin position="52"/>
        <end position="72"/>
    </location>
</feature>
<feature type="topological domain" description="Cytoplasmic" evidence="1">
    <location>
        <begin position="73"/>
        <end position="75"/>
    </location>
</feature>
<feature type="transmembrane region" description="Helical" evidence="3">
    <location>
        <begin position="76"/>
        <end position="96"/>
    </location>
</feature>
<feature type="topological domain" description="Extracellular" evidence="1">
    <location>
        <begin position="97"/>
        <end position="106"/>
    </location>
</feature>
<feature type="transmembrane region" description="Helical" evidence="3">
    <location>
        <begin position="107"/>
        <end position="127"/>
    </location>
</feature>
<feature type="topological domain" description="Cytoplasmic" evidence="1">
    <location>
        <begin position="128"/>
        <end position="139"/>
    </location>
</feature>
<feature type="transmembrane region" description="Helical" evidence="3">
    <location>
        <begin position="140"/>
        <end position="160"/>
    </location>
</feature>
<feature type="topological domain" description="Extracellular" evidence="1">
    <location>
        <begin position="161"/>
        <end position="163"/>
    </location>
</feature>
<feature type="transmembrane region" description="Helical" evidence="3">
    <location>
        <begin position="164"/>
        <end position="184"/>
    </location>
</feature>
<feature type="topological domain" description="Cytoplasmic">
    <location>
        <begin position="185"/>
        <end position="404"/>
    </location>
</feature>
<feature type="region of interest" description="Disordered" evidence="4">
    <location>
        <begin position="194"/>
        <end position="404"/>
    </location>
</feature>
<feature type="region of interest" description="CTAR1" evidence="1">
    <location>
        <begin position="194"/>
        <end position="232"/>
    </location>
</feature>
<feature type="region of interest" description="CTAR2" evidence="1">
    <location>
        <begin position="370"/>
        <end position="404"/>
    </location>
</feature>
<feature type="short sequence motif" description="Interaction with host TRAF proteins" evidence="1">
    <location>
        <begin position="204"/>
        <end position="208"/>
    </location>
</feature>
<feature type="compositionally biased region" description="Basic and acidic residues" evidence="4">
    <location>
        <begin position="210"/>
        <end position="224"/>
    </location>
</feature>
<feature type="compositionally biased region" description="Low complexity" evidence="4">
    <location>
        <begin position="251"/>
        <end position="322"/>
    </location>
</feature>
<feature type="compositionally biased region" description="Low complexity" evidence="4">
    <location>
        <begin position="375"/>
        <end position="384"/>
    </location>
</feature>
<comment type="function">
    <text evidence="2">Acts as a CD40 functional homolog to prevent apoptosis of infected B-lymphocytes and drive their proliferation. Functions as a constitutively active tumor necrosis factor receptor that induces the activation of several signaling pathways, including those of the NF-kappa-B family. LMP1 signaling leads to up-regulation of antiapoptotic proteins and provide growth signals in latently infected cells. Interacts with host UBE2I and subsequently affects the sumoylation state of several cellular proteins. For example, induces the sumoylation of host IRF7 thereby limiting its transcriptional activity and modulating the activation of innate immune responses. Also inhibits host IFN-alpha-stimulated STAT2 nuclear translocation and interferon-stimulated response element transcriptional activity by interacting with and inhibiting host TYK2. Induces SUMO expression during viral latency thereby dysregulating the host sumoylation processes.</text>
</comment>
<comment type="subunit">
    <text evidence="2">Interacts (via PXQXT motif) with host tumor necrosis factor receptor-associated factor (TRAF) proteins TRAF1, TRAF2, TRAF3 and TRAF5. Interacts with human protein ZMYND11; leading to negatively regulate NF-kappa-B activation. Interacts with host UBE2I; this interaction induces the sumoylation of various cellular proteins. Interacts with host IRF7. Interacts with host TYK2.</text>
</comment>
<comment type="subcellular location">
    <subcellularLocation>
        <location evidence="1">Host cell membrane</location>
        <topology evidence="1">Multi-pass membrane protein</topology>
    </subcellularLocation>
</comment>
<comment type="domain">
    <text evidence="1">Two regions, C-terminal-activating region 1 (CTAR1) and CTAR2, have been identified within the cytoplasmic carboxy terminal domain that activates NF-kappa-B.</text>
</comment>
<comment type="PTM">
    <text evidence="1">Ubiquitinated on the N-terminus.</text>
</comment>
<comment type="similarity">
    <text evidence="5">Belongs to the herpesviridae LMP-1 family.</text>
</comment>
<evidence type="ECO:0000250" key="1"/>
<evidence type="ECO:0000250" key="2">
    <source>
        <dbReference type="UniProtKB" id="P03230"/>
    </source>
</evidence>
<evidence type="ECO:0000255" key="3"/>
<evidence type="ECO:0000256" key="4">
    <source>
        <dbReference type="SAM" id="MobiDB-lite"/>
    </source>
</evidence>
<evidence type="ECO:0000305" key="5"/>
<sequence length="404" mass="43770">MERDLESAPPSAPRPPLGPPLSSSIGLALLLLLLALLFWLYIVMSDWTGGALLVLYSFALMLIIIILIIFIFRRDLLCPLGGLGLLLLMITLLLIALWNLHGQALYLGIVLFIFGCLLVFGIWIYFLEILWRLGATLWQLLAFILAFFLAIILLIIALYLQQNWWTLLVDLLWLLLFMAILIWMYYHGPRHTDEHHHDDSLPHPQQATDDSSHESDSNSNEGRHHLLVSGAGDGPPLCSQNLGAPGGGPDNGPQDPDNTDDNGPQDPDNTDDNGPQDPDNTDDNGPQDPDNTDDNGPQDPDNTDDNGPQDPDNTDDNGPQDPDNTDDNGPHDPLPHSPSDSAGNDGGPPNLTEEVANKGGDRGPPSMTDGGGGDPHLPTLLLGTSGSGGDDDDPHGPVQLSYYD</sequence>
<dbReference type="EMBL" id="X58140">
    <property type="protein sequence ID" value="CAA41148.1"/>
    <property type="molecule type" value="Genomic_DNA"/>
</dbReference>
<dbReference type="EMBL" id="D10059">
    <property type="protein sequence ID" value="BAA00948.1"/>
    <property type="molecule type" value="Genomic_DNA"/>
</dbReference>
<dbReference type="PIR" id="JQ1434">
    <property type="entry name" value="LABECA"/>
</dbReference>
<dbReference type="SMR" id="P29362"/>
<dbReference type="IntAct" id="P29362">
    <property type="interactions" value="4"/>
</dbReference>
<dbReference type="MINT" id="P29362"/>
<dbReference type="GO" id="GO:0020002">
    <property type="term" value="C:host cell plasma membrane"/>
    <property type="evidence" value="ECO:0007669"/>
    <property type="project" value="UniProtKB-SubCell"/>
</dbReference>
<dbReference type="GO" id="GO:0016020">
    <property type="term" value="C:membrane"/>
    <property type="evidence" value="ECO:0007669"/>
    <property type="project" value="UniProtKB-KW"/>
</dbReference>
<dbReference type="GO" id="GO:0085033">
    <property type="term" value="P:symbiont-mediated activation of host NF-kappaB cascade"/>
    <property type="evidence" value="ECO:0007669"/>
    <property type="project" value="UniProtKB-KW"/>
</dbReference>
<dbReference type="GO" id="GO:0039574">
    <property type="term" value="P:symbiont-mediated suppression of host JAK-STAT cascade via inhibition of host TYK2 activity"/>
    <property type="evidence" value="ECO:0007669"/>
    <property type="project" value="UniProtKB-KW"/>
</dbReference>
<dbReference type="GO" id="GO:0039527">
    <property type="term" value="P:symbiont-mediated suppression of host TRAF-mediated signal transduction"/>
    <property type="evidence" value="ECO:0007669"/>
    <property type="project" value="UniProtKB-KW"/>
</dbReference>
<dbReference type="GO" id="GO:0039502">
    <property type="term" value="P:symbiont-mediated suppression of host type I interferon-mediated signaling pathway"/>
    <property type="evidence" value="ECO:0007669"/>
    <property type="project" value="UniProtKB-KW"/>
</dbReference>
<dbReference type="GO" id="GO:0019087">
    <property type="term" value="P:symbiont-mediated transformation of host cell"/>
    <property type="evidence" value="ECO:0007669"/>
    <property type="project" value="InterPro"/>
</dbReference>
<dbReference type="InterPro" id="IPR007961">
    <property type="entry name" value="Herpes_LMP1"/>
</dbReference>
<dbReference type="Pfam" id="PF05297">
    <property type="entry name" value="Herpes_LMP1"/>
    <property type="match status" value="2"/>
</dbReference>
<organismHost>
    <name type="scientific">Homo sapiens</name>
    <name type="common">Human</name>
    <dbReference type="NCBI Taxonomy" id="9606"/>
</organismHost>
<organism>
    <name type="scientific">Epstein-Barr virus (strain Cao)</name>
    <name type="common">HHV-4</name>
    <name type="synonym">Human herpesvirus 4</name>
    <dbReference type="NCBI Taxonomy" id="31525"/>
    <lineage>
        <taxon>Viruses</taxon>
        <taxon>Duplodnaviria</taxon>
        <taxon>Heunggongvirae</taxon>
        <taxon>Peploviricota</taxon>
        <taxon>Herviviricetes</taxon>
        <taxon>Herpesvirales</taxon>
        <taxon>Orthoherpesviridae</taxon>
        <taxon>Gammaherpesvirinae</taxon>
        <taxon>Lymphocryptovirus</taxon>
        <taxon>Lymphocryptovirus humangamma4</taxon>
        <taxon>Epstein-Barr virus (strain GD1)</taxon>
    </lineage>
</organism>
<gene>
    <name type="primary">LMP1</name>
    <name type="ORF">BNLF1</name>
</gene>
<accession>P29362</accession>
<keyword id="KW-1074">Activation of host NF-kappa-B by virus</keyword>
<keyword id="KW-1032">Host cell membrane</keyword>
<keyword id="KW-1043">Host membrane</keyword>
<keyword id="KW-0945">Host-virus interaction</keyword>
<keyword id="KW-1090">Inhibition of host innate immune response by virus</keyword>
<keyword id="KW-1114">Inhibition of host interferon signaling pathway by virus</keyword>
<keyword id="KW-1113">Inhibition of host RLR pathway by virus</keyword>
<keyword id="KW-1110">Inhibition of host TRAFs by virus</keyword>
<keyword id="KW-1112">Inhibition of host TYK2 by virus</keyword>
<keyword id="KW-0922">Interferon antiviral system evasion</keyword>
<keyword id="KW-0472">Membrane</keyword>
<keyword id="KW-0553">Oncogene</keyword>
<keyword id="KW-0597">Phosphoprotein</keyword>
<keyword id="KW-0812">Transmembrane</keyword>
<keyword id="KW-1133">Transmembrane helix</keyword>
<keyword id="KW-0832">Ubl conjugation</keyword>
<keyword id="KW-0899">Viral immunoevasion</keyword>
<proteinExistence type="inferred from homology"/>
<name>LMP1_EBVC</name>
<reference key="1">
    <citation type="journal article" date="1991" name="J. Gen. Virol.">
        <title>Isolation and sequencing of the Epstein-Barr virus BNLF-1 gene (LMP1) from a Chinese nasopharyngeal carcinoma.</title>
        <authorList>
            <person name="Hu L.F."/>
            <person name="Zabarovsky E.R."/>
            <person name="Chen F."/>
            <person name="Cao S.L."/>
            <person name="Ernberg I."/>
            <person name="Klein G."/>
            <person name="Winberg G."/>
        </authorList>
    </citation>
    <scope>NUCLEOTIDE SEQUENCE [GENOMIC DNA]</scope>
</reference>